<gene>
    <name type="primary">TMEM63A</name>
</gene>
<name>TM63A_CAPHI</name>
<evidence type="ECO:0000250" key="1">
    <source>
        <dbReference type="UniProtKB" id="O94886"/>
    </source>
</evidence>
<evidence type="ECO:0000250" key="2">
    <source>
        <dbReference type="UniProtKB" id="Q91YT8"/>
    </source>
</evidence>
<evidence type="ECO:0000255" key="3"/>
<evidence type="ECO:0000269" key="4">
    <source>
    </source>
</evidence>
<evidence type="ECO:0000269" key="5">
    <source>
    </source>
</evidence>
<evidence type="ECO:0000305" key="6"/>
<reference key="1">
    <citation type="submission" date="2016-04" db="EMBL/GenBank/DDBJ databases">
        <title>Polished mammalian reference genomes with single-molecule sequencing and chromosome conformation capture applied to the Capra hircus genome.</title>
        <authorList>
            <person name="Bickhart D.M."/>
            <person name="Koren S."/>
            <person name="Rosen B."/>
            <person name="Hastie A."/>
            <person name="Liachko I."/>
            <person name="Sullivan S.T."/>
            <person name="Burton J."/>
            <person name="Sayre B.L."/>
            <person name="Huson H.J."/>
            <person name="Lee J."/>
            <person name="Lam E."/>
            <person name="Kelley C.M."/>
            <person name="Hutchison J.L."/>
            <person name="Zhou Y."/>
            <person name="Sun J."/>
            <person name="Crisa A."/>
            <person name="Schwartz J.C."/>
            <person name="Hammond J.A."/>
            <person name="Schroeder S.G."/>
            <person name="Liu G.E."/>
            <person name="Dunham M."/>
            <person name="Shendure J."/>
            <person name="Sonstegard T.S."/>
            <person name="Phillippy A.M."/>
            <person name="Van Tassell C.P."/>
            <person name="Smith T.P."/>
        </authorList>
    </citation>
    <scope>NUCLEOTIDE SEQUENCE [LARGE SCALE GENOMIC DNA]</scope>
</reference>
<reference key="2">
    <citation type="journal article" date="2015" name="Parasit. Vectors">
        <title>Transmembrane protein 63A is a partner protein of Haemonchus contortus galectin in the regulation of goat peripheral blood mononuclear cells.</title>
        <authorList>
            <person name="Yuan C."/>
            <person name="Zhang H."/>
            <person name="Wang W."/>
            <person name="Li Y."/>
            <person name="Yan R."/>
            <person name="Xu L."/>
            <person name="Song X."/>
            <person name="Li X."/>
        </authorList>
    </citation>
    <scope>FUNCTION (MICROBIAL FUNCTION)</scope>
    <scope>SUBCELLULAR LOCATION</scope>
    <scope>INTERACTION WITH H.CONTORTUS GAL-1</scope>
</reference>
<reference key="3">
    <citation type="journal article" date="2017" name="Parasit. Vectors">
        <title>The N- and C-terminal carbohydrate recognition domains of Haemonchus contortus galectin bind to distinct receptors of goat PBMC and contribute differently to its immunomodulatory functions in host-parasite interactions.</title>
        <authorList>
            <person name="Lu M."/>
            <person name="Tian X."/>
            <person name="Yang X."/>
            <person name="Yuan C."/>
            <person name="Ehsan M."/>
            <person name="Liu X."/>
            <person name="Yan R."/>
            <person name="Xu L."/>
            <person name="Song X."/>
            <person name="Li X."/>
        </authorList>
    </citation>
    <scope>INTERACTION WITH H.CONTORTUS GAL-1</scope>
</reference>
<proteinExistence type="evidence at protein level"/>
<feature type="chain" id="PRO_0000448963" description="Mechanosensitive cation channel TMEM63A">
    <location>
        <begin position="1"/>
        <end position="803"/>
    </location>
</feature>
<feature type="topological domain" description="Extracellular" evidence="1">
    <location>
        <begin position="1"/>
        <end position="51"/>
    </location>
</feature>
<feature type="transmembrane region" description="Helical; Name=TM0" evidence="1">
    <location>
        <begin position="52"/>
        <end position="74"/>
    </location>
</feature>
<feature type="topological domain" description="Cytoplasmic" evidence="1">
    <location>
        <begin position="75"/>
        <end position="133"/>
    </location>
</feature>
<feature type="transmembrane region" description="Helical; Name=TM1" evidence="1">
    <location>
        <begin position="134"/>
        <end position="166"/>
    </location>
</feature>
<feature type="topological domain" description="Extracellular" evidence="1">
    <location>
        <begin position="167"/>
        <end position="190"/>
    </location>
</feature>
<feature type="transmembrane region" description="Helical; Name=TM2" evidence="1">
    <location>
        <begin position="191"/>
        <end position="216"/>
    </location>
</feature>
<feature type="topological domain" description="Cytoplasmic" evidence="1">
    <location>
        <begin position="217"/>
        <end position="415"/>
    </location>
</feature>
<feature type="transmembrane region" description="Helical; Name=TM3" evidence="1">
    <location>
        <begin position="416"/>
        <end position="443"/>
    </location>
</feature>
<feature type="topological domain" description="Extracellular" evidence="1">
    <location>
        <begin position="444"/>
        <end position="461"/>
    </location>
</feature>
<feature type="transmembrane region" description="Helical; Name=TM4" evidence="1">
    <location>
        <begin position="462"/>
        <end position="489"/>
    </location>
</feature>
<feature type="topological domain" description="Cytoplasmic" evidence="1">
    <location>
        <begin position="490"/>
        <end position="494"/>
    </location>
</feature>
<feature type="transmembrane region" description="Helical; Name=TM5" evidence="1">
    <location>
        <begin position="495"/>
        <end position="531"/>
    </location>
</feature>
<feature type="topological domain" description="Extracellular" evidence="1">
    <location>
        <begin position="532"/>
        <end position="553"/>
    </location>
</feature>
<feature type="transmembrane region" description="Helical; Name=TM6" evidence="1">
    <location>
        <begin position="554"/>
        <end position="585"/>
    </location>
</feature>
<feature type="topological domain" description="Cytoplasmic" evidence="1">
    <location>
        <begin position="586"/>
        <end position="605"/>
    </location>
</feature>
<feature type="transmembrane region" description="Helical; Name=TM7" evidence="1">
    <location>
        <begin position="606"/>
        <end position="623"/>
    </location>
</feature>
<feature type="topological domain" description="Extracellular" evidence="1">
    <location>
        <begin position="624"/>
        <end position="627"/>
    </location>
</feature>
<feature type="transmembrane region" description="Helical; Name=TM8" evidence="1">
    <location>
        <begin position="628"/>
        <end position="650"/>
    </location>
</feature>
<feature type="topological domain" description="Cytoplasmic" evidence="1">
    <location>
        <begin position="651"/>
        <end position="660"/>
    </location>
</feature>
<feature type="transmembrane region" description="Helical; Name=TM9" evidence="1">
    <location>
        <begin position="661"/>
        <end position="688"/>
    </location>
</feature>
<feature type="topological domain" description="Extracellular" evidence="1">
    <location>
        <begin position="689"/>
        <end position="693"/>
    </location>
</feature>
<feature type="transmembrane region" description="Helical; Name=TM10" evidence="1">
    <location>
        <begin position="694"/>
        <end position="708"/>
    </location>
</feature>
<feature type="topological domain" description="Cytoplasmic" evidence="1">
    <location>
        <begin position="709"/>
        <end position="803"/>
    </location>
</feature>
<feature type="region of interest" description="Intracellular linker IL2; confers mechanosensitivity" evidence="1">
    <location>
        <begin position="218"/>
        <end position="413"/>
    </location>
</feature>
<feature type="region of interest" description="Gating helix" evidence="1">
    <location>
        <begin position="554"/>
        <end position="585"/>
    </location>
</feature>
<comment type="function">
    <text evidence="1 2">Mechanosensitive cation channel with low conductance and high activation threshold. In contrast to TMEM63B, does not show phospholipid scramblase activity (By similarity). Acts as a regulator of lysosomal morphology by mediating lysosomal mechanosensitivity (By similarity). Important for the baby's first breath and respiration throughout life (By similarity). Upon lung inflation conducts cation currents in alveolar type 1 and 2 cells triggering lamellar body exocytosis and surfactant secretion into airspace (By similarity). Also acts as an osmosensitive cation channel preferentially activated by hypotonic stress (By similarity).</text>
</comment>
<comment type="function">
    <text evidence="4">(Microbial infection) Involved in the immunomodulatory effects exerted by H.contortus GAL-1 on host peripheral blood mononuclear cells to down-regulate host immune response.</text>
</comment>
<comment type="catalytic activity">
    <reaction evidence="2">
        <text>Ca(2+)(in) = Ca(2+)(out)</text>
        <dbReference type="Rhea" id="RHEA:29671"/>
        <dbReference type="ChEBI" id="CHEBI:29108"/>
    </reaction>
</comment>
<comment type="subunit">
    <text evidence="4 5">(Microbial infection) Interacts with H.contortus GAL-1 (via domain galectin 1).</text>
</comment>
<comment type="subcellular location">
    <subcellularLocation>
        <location evidence="1">Lysosome membrane</location>
        <topology evidence="3">Multi-pass membrane protein</topology>
    </subcellularLocation>
    <subcellularLocation>
        <location evidence="1">Early endosome membrane</location>
        <topology evidence="3">Multi-pass membrane protein</topology>
    </subcellularLocation>
    <subcellularLocation>
        <location evidence="1">Cell membrane</location>
        <topology evidence="3">Multi-pass membrane protein</topology>
    </subcellularLocation>
</comment>
<comment type="similarity">
    <text evidence="6">Belongs to the CSC1 (TC 1.A.17) family.</text>
</comment>
<organism>
    <name type="scientific">Capra hircus</name>
    <name type="common">Goat</name>
    <dbReference type="NCBI Taxonomy" id="9925"/>
    <lineage>
        <taxon>Eukaryota</taxon>
        <taxon>Metazoa</taxon>
        <taxon>Chordata</taxon>
        <taxon>Craniata</taxon>
        <taxon>Vertebrata</taxon>
        <taxon>Euteleostomi</taxon>
        <taxon>Mammalia</taxon>
        <taxon>Eutheria</taxon>
        <taxon>Laurasiatheria</taxon>
        <taxon>Artiodactyla</taxon>
        <taxon>Ruminantia</taxon>
        <taxon>Pecora</taxon>
        <taxon>Bovidae</taxon>
        <taxon>Caprinae</taxon>
        <taxon>Capra</taxon>
    </lineage>
</organism>
<dbReference type="EMBL" id="LWLT01000016">
    <property type="status" value="NOT_ANNOTATED_CDS"/>
    <property type="molecule type" value="Genomic_DNA"/>
</dbReference>
<dbReference type="SMR" id="A0A452G813"/>
<dbReference type="STRING" id="9925.ENSCHIP00000032717"/>
<dbReference type="OMA" id="DPTQVIW"/>
<dbReference type="Proteomes" id="UP000291000">
    <property type="component" value="Unassembled WGS sequence"/>
</dbReference>
<dbReference type="Proteomes" id="UP000694566">
    <property type="component" value="Unplaced"/>
</dbReference>
<dbReference type="GO" id="GO:0031901">
    <property type="term" value="C:early endosome membrane"/>
    <property type="evidence" value="ECO:0007669"/>
    <property type="project" value="UniProtKB-SubCell"/>
</dbReference>
<dbReference type="GO" id="GO:0005765">
    <property type="term" value="C:lysosomal membrane"/>
    <property type="evidence" value="ECO:0000250"/>
    <property type="project" value="UniProtKB"/>
</dbReference>
<dbReference type="GO" id="GO:0005886">
    <property type="term" value="C:plasma membrane"/>
    <property type="evidence" value="ECO:0000314"/>
    <property type="project" value="UniProtKB"/>
</dbReference>
<dbReference type="GO" id="GO:0005227">
    <property type="term" value="F:calcium-activated cation channel activity"/>
    <property type="evidence" value="ECO:0007669"/>
    <property type="project" value="InterPro"/>
</dbReference>
<dbReference type="GO" id="GO:0003676">
    <property type="term" value="F:nucleic acid binding"/>
    <property type="evidence" value="ECO:0007669"/>
    <property type="project" value="InterPro"/>
</dbReference>
<dbReference type="GO" id="GO:1990760">
    <property type="term" value="F:osmolarity-sensing monoatomic cation channel activity"/>
    <property type="evidence" value="ECO:0000250"/>
    <property type="project" value="UniProtKB"/>
</dbReference>
<dbReference type="GO" id="GO:0007040">
    <property type="term" value="P:lysosome organization"/>
    <property type="evidence" value="ECO:0000250"/>
    <property type="project" value="UniProtKB"/>
</dbReference>
<dbReference type="GO" id="GO:0001817">
    <property type="term" value="P:regulation of cytokine production"/>
    <property type="evidence" value="ECO:0000315"/>
    <property type="project" value="UniProtKB"/>
</dbReference>
<dbReference type="GO" id="GO:0032944">
    <property type="term" value="P:regulation of mononuclear cell proliferation"/>
    <property type="evidence" value="ECO:0000315"/>
    <property type="project" value="UniProtKB"/>
</dbReference>
<dbReference type="GO" id="GO:0045428">
    <property type="term" value="P:regulation of nitric oxide biosynthetic process"/>
    <property type="evidence" value="ECO:0000315"/>
    <property type="project" value="UniProtKB"/>
</dbReference>
<dbReference type="GO" id="GO:0050764">
    <property type="term" value="P:regulation of phagocytosis"/>
    <property type="evidence" value="ECO:0000315"/>
    <property type="project" value="UniProtKB"/>
</dbReference>
<dbReference type="GO" id="GO:0160069">
    <property type="term" value="P:surfactant secretion"/>
    <property type="evidence" value="ECO:0000250"/>
    <property type="project" value="UniProtKB"/>
</dbReference>
<dbReference type="Gene3D" id="3.30.70.330">
    <property type="match status" value="1"/>
</dbReference>
<dbReference type="InterPro" id="IPR045122">
    <property type="entry name" value="Csc1-like"/>
</dbReference>
<dbReference type="InterPro" id="IPR003864">
    <property type="entry name" value="CSC1/OSCA1-like_7TM"/>
</dbReference>
<dbReference type="InterPro" id="IPR027815">
    <property type="entry name" value="CSC1/OSCA1-like_cyt"/>
</dbReference>
<dbReference type="InterPro" id="IPR032880">
    <property type="entry name" value="Csc1/OSCA1-like_N"/>
</dbReference>
<dbReference type="InterPro" id="IPR012677">
    <property type="entry name" value="Nucleotide-bd_a/b_plait_sf"/>
</dbReference>
<dbReference type="InterPro" id="IPR035979">
    <property type="entry name" value="RBD_domain_sf"/>
</dbReference>
<dbReference type="PANTHER" id="PTHR13018:SF24">
    <property type="entry name" value="CSC1-LIKE PROTEIN 1"/>
    <property type="match status" value="1"/>
</dbReference>
<dbReference type="PANTHER" id="PTHR13018">
    <property type="entry name" value="PROBABLE MEMBRANE PROTEIN DUF221-RELATED"/>
    <property type="match status" value="1"/>
</dbReference>
<dbReference type="Pfam" id="PF14703">
    <property type="entry name" value="PHM7_cyt"/>
    <property type="match status" value="1"/>
</dbReference>
<dbReference type="Pfam" id="PF02714">
    <property type="entry name" value="RSN1_7TM"/>
    <property type="match status" value="1"/>
</dbReference>
<dbReference type="Pfam" id="PF13967">
    <property type="entry name" value="RSN1_TM"/>
    <property type="match status" value="1"/>
</dbReference>
<dbReference type="SUPFAM" id="SSF54928">
    <property type="entry name" value="RNA-binding domain, RBD"/>
    <property type="match status" value="1"/>
</dbReference>
<keyword id="KW-0106">Calcium</keyword>
<keyword id="KW-1003">Cell membrane</keyword>
<keyword id="KW-0967">Endosome</keyword>
<keyword id="KW-0407">Ion channel</keyword>
<keyword id="KW-0406">Ion transport</keyword>
<keyword id="KW-0458">Lysosome</keyword>
<keyword id="KW-0472">Membrane</keyword>
<keyword id="KW-0597">Phosphoprotein</keyword>
<keyword id="KW-1185">Reference proteome</keyword>
<keyword id="KW-0812">Transmembrane</keyword>
<keyword id="KW-1133">Transmembrane helix</keyword>
<keyword id="KW-0813">Transport</keyword>
<sequence>MTDSPFLELWQSRTVAIRERLGIGDQPNDSYCYNSAKNSTVLQGVTFGGIPTVLFIDVSCFLFLIVVFSIIRRKFWDYGRIALVSEGNSESRFRRLSSSSSGQQDFESELGCCSWLTAIFRLHDDQILEWCGEDAIHYLSFQRHIIFLLVVVSCLSLCIILPVNLSGDLLDKDPYSFGRTTIANLQTDNNLLWLHTIFAILYLILTVVFMRHHTQSIKYKEESLVRRTLFVTGLPKDAKKETVESHFRDAYPTCEVVEVQLCYNVAKLIYLCKERKKTEKSLTYYTNLQVKTGQRTFINPKPCGQFCCCEVRGCEWEDAISYYTRMKDRLMERITEEECRVQDQPLGMAFVTFQEKSMATYILKDFNACKCQGLQCKGEPQPSSHSRELGISRWSVTFAAYPEDICWKNLSIQGFRWWFQWLGINFILFVGLFFLTTPSIILSTMDKFNVTKPIHALNDPIISQFFPTLLLWSFSALLPTIVCYSTLLESHWTKSGENRIMMTKVYIFLIFMVLILPSLGLTSLDFFFRWLFDKTSSEASIRLECVFLPDQGAFFVNYVIASAFIGNGMELLRLPGLILYTFRMVMAKTAADRRNVKQHQAFEYEFGAMYAWMLCVFTVIMAYSITCPIIVPFGLIYILLKHMVDRHNLYFAYLPAKLEKRIHFAAVNQALAAPILCLFWLYFFSFLRLGLKAPLTLFTFLVLLLTILVCLAYTCFGCFRHLSPLNYKTEESANDKGNEAGAHVPPPFTPYVPRILNSSSSEKTALSPQQQTYGAINNISGTVAGQGLAQSPEDSVAAADQED</sequence>
<accession>A0A452G813</accession>
<protein>
    <recommendedName>
        <fullName evidence="6">Mechanosensitive cation channel TMEM63A</fullName>
    </recommendedName>
    <alternativeName>
        <fullName>Transmembrane protein 63A</fullName>
    </alternativeName>
</protein>